<dbReference type="EC" id="1.10.3.9" evidence="1"/>
<dbReference type="EMBL" id="AP002983">
    <property type="protein sequence ID" value="BAB33176.1"/>
    <property type="molecule type" value="Genomic_DNA"/>
</dbReference>
<dbReference type="RefSeq" id="NP_084778.1">
    <property type="nucleotide sequence ID" value="NC_002694.1"/>
</dbReference>
<dbReference type="SMR" id="Q9BBU3"/>
<dbReference type="GeneID" id="802882"/>
<dbReference type="GO" id="GO:0009535">
    <property type="term" value="C:chloroplast thylakoid membrane"/>
    <property type="evidence" value="ECO:0007669"/>
    <property type="project" value="UniProtKB-SubCell"/>
</dbReference>
<dbReference type="GO" id="GO:0009523">
    <property type="term" value="C:photosystem II"/>
    <property type="evidence" value="ECO:0007669"/>
    <property type="project" value="UniProtKB-KW"/>
</dbReference>
<dbReference type="GO" id="GO:0016168">
    <property type="term" value="F:chlorophyll binding"/>
    <property type="evidence" value="ECO:0007669"/>
    <property type="project" value="UniProtKB-UniRule"/>
</dbReference>
<dbReference type="GO" id="GO:0045156">
    <property type="term" value="F:electron transporter, transferring electrons within the cyclic electron transport pathway of photosynthesis activity"/>
    <property type="evidence" value="ECO:0007669"/>
    <property type="project" value="InterPro"/>
</dbReference>
<dbReference type="GO" id="GO:0005506">
    <property type="term" value="F:iron ion binding"/>
    <property type="evidence" value="ECO:0007669"/>
    <property type="project" value="UniProtKB-UniRule"/>
</dbReference>
<dbReference type="GO" id="GO:0016682">
    <property type="term" value="F:oxidoreductase activity, acting on diphenols and related substances as donors, oxygen as acceptor"/>
    <property type="evidence" value="ECO:0007669"/>
    <property type="project" value="UniProtKB-UniRule"/>
</dbReference>
<dbReference type="GO" id="GO:0010242">
    <property type="term" value="F:oxygen evolving activity"/>
    <property type="evidence" value="ECO:0007669"/>
    <property type="project" value="UniProtKB-EC"/>
</dbReference>
<dbReference type="GO" id="GO:0009772">
    <property type="term" value="P:photosynthetic electron transport in photosystem II"/>
    <property type="evidence" value="ECO:0007669"/>
    <property type="project" value="InterPro"/>
</dbReference>
<dbReference type="GO" id="GO:0009635">
    <property type="term" value="P:response to herbicide"/>
    <property type="evidence" value="ECO:0007669"/>
    <property type="project" value="UniProtKB-KW"/>
</dbReference>
<dbReference type="CDD" id="cd09289">
    <property type="entry name" value="Photosystem-II_D1"/>
    <property type="match status" value="1"/>
</dbReference>
<dbReference type="FunFam" id="1.20.85.10:FF:000002">
    <property type="entry name" value="Photosystem II protein D1"/>
    <property type="match status" value="1"/>
</dbReference>
<dbReference type="Gene3D" id="1.20.85.10">
    <property type="entry name" value="Photosystem II protein D1-like"/>
    <property type="match status" value="1"/>
</dbReference>
<dbReference type="HAMAP" id="MF_01379">
    <property type="entry name" value="PSII_PsbA_D1"/>
    <property type="match status" value="1"/>
</dbReference>
<dbReference type="InterPro" id="IPR055266">
    <property type="entry name" value="D1/D2"/>
</dbReference>
<dbReference type="InterPro" id="IPR036854">
    <property type="entry name" value="Photo_II_D1/D2_sf"/>
</dbReference>
<dbReference type="InterPro" id="IPR000484">
    <property type="entry name" value="Photo_RC_L/M"/>
</dbReference>
<dbReference type="InterPro" id="IPR055265">
    <property type="entry name" value="Photo_RC_L/M_CS"/>
</dbReference>
<dbReference type="InterPro" id="IPR005867">
    <property type="entry name" value="PSII_D1"/>
</dbReference>
<dbReference type="NCBIfam" id="TIGR01151">
    <property type="entry name" value="psbA"/>
    <property type="match status" value="1"/>
</dbReference>
<dbReference type="PANTHER" id="PTHR33149:SF12">
    <property type="entry name" value="PHOTOSYSTEM II D2 PROTEIN"/>
    <property type="match status" value="1"/>
</dbReference>
<dbReference type="PANTHER" id="PTHR33149">
    <property type="entry name" value="PHOTOSYSTEM II PROTEIN D1"/>
    <property type="match status" value="1"/>
</dbReference>
<dbReference type="Pfam" id="PF00124">
    <property type="entry name" value="Photo_RC"/>
    <property type="match status" value="1"/>
</dbReference>
<dbReference type="PRINTS" id="PR00256">
    <property type="entry name" value="REACTNCENTRE"/>
</dbReference>
<dbReference type="SUPFAM" id="SSF81483">
    <property type="entry name" value="Bacterial photosystem II reaction centre, L and M subunits"/>
    <property type="match status" value="1"/>
</dbReference>
<dbReference type="PROSITE" id="PS00244">
    <property type="entry name" value="REACTION_CENTER"/>
    <property type="match status" value="1"/>
</dbReference>
<proteinExistence type="inferred from homology"/>
<keyword id="KW-0007">Acetylation</keyword>
<keyword id="KW-0106">Calcium</keyword>
<keyword id="KW-0148">Chlorophyll</keyword>
<keyword id="KW-0150">Chloroplast</keyword>
<keyword id="KW-0157">Chromophore</keyword>
<keyword id="KW-0249">Electron transport</keyword>
<keyword id="KW-0359">Herbicide resistance</keyword>
<keyword id="KW-0408">Iron</keyword>
<keyword id="KW-0460">Magnesium</keyword>
<keyword id="KW-0464">Manganese</keyword>
<keyword id="KW-0472">Membrane</keyword>
<keyword id="KW-0479">Metal-binding</keyword>
<keyword id="KW-0560">Oxidoreductase</keyword>
<keyword id="KW-0597">Phosphoprotein</keyword>
<keyword id="KW-0602">Photosynthesis</keyword>
<keyword id="KW-0604">Photosystem II</keyword>
<keyword id="KW-0934">Plastid</keyword>
<keyword id="KW-0793">Thylakoid</keyword>
<keyword id="KW-0812">Transmembrane</keyword>
<keyword id="KW-1133">Transmembrane helix</keyword>
<keyword id="KW-0813">Transport</keyword>
<feature type="initiator methionine" description="Removed" evidence="1">
    <location>
        <position position="1"/>
    </location>
</feature>
<feature type="chain" id="PRO_0000090447" description="Photosystem II protein D1" evidence="1">
    <location>
        <begin position="2"/>
        <end position="344"/>
    </location>
</feature>
<feature type="propeptide" id="PRO_0000316458" evidence="1">
    <location>
        <begin position="345"/>
        <end position="353"/>
    </location>
</feature>
<feature type="transmembrane region" description="Helical" evidence="1">
    <location>
        <begin position="29"/>
        <end position="46"/>
    </location>
</feature>
<feature type="transmembrane region" description="Helical" evidence="1">
    <location>
        <begin position="118"/>
        <end position="133"/>
    </location>
</feature>
<feature type="transmembrane region" description="Helical" evidence="1">
    <location>
        <begin position="142"/>
        <end position="156"/>
    </location>
</feature>
<feature type="transmembrane region" description="Helical" evidence="1">
    <location>
        <begin position="197"/>
        <end position="218"/>
    </location>
</feature>
<feature type="transmembrane region" description="Helical" evidence="1">
    <location>
        <begin position="274"/>
        <end position="288"/>
    </location>
</feature>
<feature type="binding site" description="axial binding residue" evidence="1">
    <location>
        <position position="118"/>
    </location>
    <ligand>
        <name>chlorophyll a</name>
        <dbReference type="ChEBI" id="CHEBI:58416"/>
        <label>ChlzD1</label>
    </ligand>
    <ligandPart>
        <name>Mg</name>
        <dbReference type="ChEBI" id="CHEBI:25107"/>
    </ligandPart>
</feature>
<feature type="binding site" evidence="1">
    <location>
        <position position="126"/>
    </location>
    <ligand>
        <name>pheophytin a</name>
        <dbReference type="ChEBI" id="CHEBI:136840"/>
        <label>D1</label>
    </ligand>
</feature>
<feature type="binding site" evidence="1">
    <location>
        <position position="170"/>
    </location>
    <ligand>
        <name>[CaMn4O5] cluster</name>
        <dbReference type="ChEBI" id="CHEBI:189552"/>
    </ligand>
</feature>
<feature type="binding site" evidence="1">
    <location>
        <position position="189"/>
    </location>
    <ligand>
        <name>[CaMn4O5] cluster</name>
        <dbReference type="ChEBI" id="CHEBI:189552"/>
    </ligand>
</feature>
<feature type="binding site" description="axial binding residue" evidence="1">
    <location>
        <position position="198"/>
    </location>
    <ligand>
        <name>chlorophyll a</name>
        <dbReference type="ChEBI" id="CHEBI:58416"/>
        <label>PD1</label>
    </ligand>
    <ligandPart>
        <name>Mg</name>
        <dbReference type="ChEBI" id="CHEBI:25107"/>
    </ligandPart>
</feature>
<feature type="binding site" evidence="1">
    <location>
        <position position="215"/>
    </location>
    <ligand>
        <name>a quinone</name>
        <dbReference type="ChEBI" id="CHEBI:132124"/>
        <label>B</label>
    </ligand>
</feature>
<feature type="binding site" evidence="1">
    <location>
        <position position="215"/>
    </location>
    <ligand>
        <name>Fe cation</name>
        <dbReference type="ChEBI" id="CHEBI:24875"/>
        <note>ligand shared with heterodimeric partner</note>
    </ligand>
</feature>
<feature type="binding site" evidence="1">
    <location>
        <begin position="264"/>
        <end position="265"/>
    </location>
    <ligand>
        <name>a quinone</name>
        <dbReference type="ChEBI" id="CHEBI:132124"/>
        <label>B</label>
    </ligand>
</feature>
<feature type="binding site" evidence="1">
    <location>
        <position position="272"/>
    </location>
    <ligand>
        <name>Fe cation</name>
        <dbReference type="ChEBI" id="CHEBI:24875"/>
        <note>ligand shared with heterodimeric partner</note>
    </ligand>
</feature>
<feature type="binding site" evidence="1">
    <location>
        <position position="332"/>
    </location>
    <ligand>
        <name>[CaMn4O5] cluster</name>
        <dbReference type="ChEBI" id="CHEBI:189552"/>
    </ligand>
</feature>
<feature type="binding site" evidence="1">
    <location>
        <position position="333"/>
    </location>
    <ligand>
        <name>[CaMn4O5] cluster</name>
        <dbReference type="ChEBI" id="CHEBI:189552"/>
    </ligand>
</feature>
<feature type="binding site" evidence="1">
    <location>
        <position position="342"/>
    </location>
    <ligand>
        <name>[CaMn4O5] cluster</name>
        <dbReference type="ChEBI" id="CHEBI:189552"/>
    </ligand>
</feature>
<feature type="binding site" evidence="1">
    <location>
        <position position="344"/>
    </location>
    <ligand>
        <name>[CaMn4O5] cluster</name>
        <dbReference type="ChEBI" id="CHEBI:189552"/>
    </ligand>
</feature>
<feature type="site" description="Tyrosine radical intermediate" evidence="1">
    <location>
        <position position="161"/>
    </location>
</feature>
<feature type="site" description="Stabilizes free radical intermediate" evidence="1">
    <location>
        <position position="190"/>
    </location>
</feature>
<feature type="site" description="Cleavage; by CTPA" evidence="1">
    <location>
        <begin position="344"/>
        <end position="345"/>
    </location>
</feature>
<feature type="modified residue" description="N-acetylthreonine" evidence="1">
    <location>
        <position position="2"/>
    </location>
</feature>
<feature type="modified residue" description="Phosphothreonine" evidence="1">
    <location>
        <position position="2"/>
    </location>
</feature>
<comment type="function">
    <text evidence="1">Photosystem II (PSII) is a light-driven water:plastoquinone oxidoreductase that uses light energy to abstract electrons from H(2)O, generating O(2) and a proton gradient subsequently used for ATP formation. It consists of a core antenna complex that captures photons, and an electron transfer chain that converts photonic excitation into a charge separation. The D1/D2 (PsbA/PsbD) reaction center heterodimer binds P680, the primary electron donor of PSII as well as several subsequent electron acceptors.</text>
</comment>
<comment type="catalytic activity">
    <reaction evidence="1">
        <text>2 a plastoquinone + 4 hnu + 2 H2O = 2 a plastoquinol + O2</text>
        <dbReference type="Rhea" id="RHEA:36359"/>
        <dbReference type="Rhea" id="RHEA-COMP:9561"/>
        <dbReference type="Rhea" id="RHEA-COMP:9562"/>
        <dbReference type="ChEBI" id="CHEBI:15377"/>
        <dbReference type="ChEBI" id="CHEBI:15379"/>
        <dbReference type="ChEBI" id="CHEBI:17757"/>
        <dbReference type="ChEBI" id="CHEBI:30212"/>
        <dbReference type="ChEBI" id="CHEBI:62192"/>
        <dbReference type="EC" id="1.10.3.9"/>
    </reaction>
</comment>
<comment type="cofactor">
    <text evidence="1">The D1/D2 heterodimer binds P680, chlorophylls that are the primary electron donor of PSII, and subsequent electron acceptors. It shares a non-heme iron and each subunit binds pheophytin, quinone, additional chlorophylls, carotenoids and lipids. D1 provides most of the ligands for the Mn4-Ca-O5 cluster of the oxygen-evolving complex (OEC). There is also a Cl(-1) ion associated with D1 and D2, which is required for oxygen evolution. The PSII complex binds additional chlorophylls, carotenoids and specific lipids.</text>
</comment>
<comment type="subunit">
    <text evidence="1">PSII is composed of 1 copy each of membrane proteins PsbA, PsbB, PsbC, PsbD, PsbE, PsbF, PsbH, PsbI, PsbJ, PsbK, PsbL, PsbM, PsbT, PsbX, PsbY, PsbZ, Psb30/Ycf12, at least 3 peripheral proteins of the oxygen-evolving complex and a large number of cofactors. It forms dimeric complexes.</text>
</comment>
<comment type="subcellular location">
    <subcellularLocation>
        <location evidence="1">Plastid</location>
        <location evidence="1">Chloroplast thylakoid membrane</location>
        <topology evidence="1">Multi-pass membrane protein</topology>
    </subcellularLocation>
</comment>
<comment type="PTM">
    <text evidence="1">Tyr-161 forms a radical intermediate that is referred to as redox-active TyrZ, YZ or Y-Z.</text>
</comment>
<comment type="PTM">
    <text evidence="1">C-terminally processed by CTPA; processing is essential to allow assembly of the oxygen-evolving complex and thus photosynthetic growth.</text>
</comment>
<comment type="miscellaneous">
    <text evidence="1">2 of the reaction center chlorophylls (ChlD1 and ChlD2) are entirely coordinated by water.</text>
</comment>
<comment type="miscellaneous">
    <text evidence="1">Herbicides such as atrazine, BNT, diuron or ioxynil bind in the Q(B) binding site and block subsequent electron transfer.</text>
</comment>
<comment type="similarity">
    <text evidence="1">Belongs to the reaction center PufL/M/PsbA/D family.</text>
</comment>
<geneLocation type="chloroplast"/>
<accession>Q9BBU3</accession>
<sequence>MTAILERRESENLWGRFCNWITSTENRLYIGWFGVLMIPTLLTATSVFIIAFIAAPPVDIDGIREPVSGSLLYGNNIISGAIIPTSAAIGLHFYPIWEAASVDEWLYNGGPYELIVLHFLLGVACYMGREWELSFRLGMRPWIAVAYSAPVAAATAVFLIYPIGQGSFSDGMPLGISGTFNFMIVFQAEHNILMHPFHMLGVAGVFGGSLFSAMHGSLVTSSLIRETTENESANEGYRFGQEEETYNIVAAHGYFGRLIFQYASFNNSRSLHFFLAAWPVVGIWFTALGISTMAFNLNGFNFNQSVVDSQGRVINTWADIINRANLGMEVMHERNAHNFPLDLAAVEAPSING</sequence>
<reference key="1">
    <citation type="journal article" date="2000" name="DNA Res.">
        <title>Complete structure of the chloroplast genome of a legume, Lotus japonicus.</title>
        <authorList>
            <person name="Kato T."/>
            <person name="Kaneko T."/>
            <person name="Sato S."/>
            <person name="Nakamura Y."/>
            <person name="Tabata S."/>
        </authorList>
    </citation>
    <scope>NUCLEOTIDE SEQUENCE [LARGE SCALE GENOMIC DNA]</scope>
    <source>
        <strain>cv. Miyakojima MG-20</strain>
    </source>
</reference>
<evidence type="ECO:0000255" key="1">
    <source>
        <dbReference type="HAMAP-Rule" id="MF_01379"/>
    </source>
</evidence>
<protein>
    <recommendedName>
        <fullName evidence="1">Photosystem II protein D1</fullName>
        <shortName evidence="1">PSII D1 protein</shortName>
        <ecNumber evidence="1">1.10.3.9</ecNumber>
    </recommendedName>
    <alternativeName>
        <fullName evidence="1">Photosystem II Q(B) protein</fullName>
    </alternativeName>
</protein>
<gene>
    <name evidence="1" type="primary">psbA</name>
</gene>
<name>PSBA_LOTJA</name>
<organism>
    <name type="scientific">Lotus japonicus</name>
    <name type="common">Lotus corniculatus var. japonicus</name>
    <dbReference type="NCBI Taxonomy" id="34305"/>
    <lineage>
        <taxon>Eukaryota</taxon>
        <taxon>Viridiplantae</taxon>
        <taxon>Streptophyta</taxon>
        <taxon>Embryophyta</taxon>
        <taxon>Tracheophyta</taxon>
        <taxon>Spermatophyta</taxon>
        <taxon>Magnoliopsida</taxon>
        <taxon>eudicotyledons</taxon>
        <taxon>Gunneridae</taxon>
        <taxon>Pentapetalae</taxon>
        <taxon>rosids</taxon>
        <taxon>fabids</taxon>
        <taxon>Fabales</taxon>
        <taxon>Fabaceae</taxon>
        <taxon>Papilionoideae</taxon>
        <taxon>50 kb inversion clade</taxon>
        <taxon>NPAAA clade</taxon>
        <taxon>Hologalegina</taxon>
        <taxon>robinioid clade</taxon>
        <taxon>Loteae</taxon>
        <taxon>Lotus</taxon>
    </lineage>
</organism>